<accession>P32425</accession>
<dbReference type="EMBL" id="X70975">
    <property type="protein sequence ID" value="CAA50306.1"/>
    <property type="molecule type" value="Genomic_DNA"/>
</dbReference>
<dbReference type="PIR" id="S32141">
    <property type="entry name" value="S32141"/>
</dbReference>
<dbReference type="RefSeq" id="WP_063483750.1">
    <property type="nucleotide sequence ID" value="NZ_CP012949.1"/>
</dbReference>
<dbReference type="SMR" id="P32425"/>
<dbReference type="PATRIC" id="fig|1889.10.peg.6250"/>
<dbReference type="OrthoDB" id="8680240at2"/>
<dbReference type="GO" id="GO:0003677">
    <property type="term" value="F:DNA binding"/>
    <property type="evidence" value="ECO:0007669"/>
    <property type="project" value="UniProtKB-KW"/>
</dbReference>
<dbReference type="GO" id="GO:0003700">
    <property type="term" value="F:DNA-binding transcription factor activity"/>
    <property type="evidence" value="ECO:0007669"/>
    <property type="project" value="InterPro"/>
</dbReference>
<dbReference type="CDD" id="cd07377">
    <property type="entry name" value="WHTH_GntR"/>
    <property type="match status" value="1"/>
</dbReference>
<dbReference type="Gene3D" id="1.20.120.530">
    <property type="entry name" value="GntR ligand-binding domain-like"/>
    <property type="match status" value="1"/>
</dbReference>
<dbReference type="Gene3D" id="1.10.10.10">
    <property type="entry name" value="Winged helix-like DNA-binding domain superfamily/Winged helix DNA-binding domain"/>
    <property type="match status" value="1"/>
</dbReference>
<dbReference type="InterPro" id="IPR011711">
    <property type="entry name" value="GntR_C"/>
</dbReference>
<dbReference type="InterPro" id="IPR008920">
    <property type="entry name" value="TF_FadR/GntR_C"/>
</dbReference>
<dbReference type="InterPro" id="IPR000524">
    <property type="entry name" value="Tscrpt_reg_HTH_GntR"/>
</dbReference>
<dbReference type="InterPro" id="IPR036388">
    <property type="entry name" value="WH-like_DNA-bd_sf"/>
</dbReference>
<dbReference type="InterPro" id="IPR036390">
    <property type="entry name" value="WH_DNA-bd_sf"/>
</dbReference>
<dbReference type="PANTHER" id="PTHR43537:SF45">
    <property type="entry name" value="GNTR FAMILY REGULATORY PROTEIN"/>
    <property type="match status" value="1"/>
</dbReference>
<dbReference type="PANTHER" id="PTHR43537">
    <property type="entry name" value="TRANSCRIPTIONAL REGULATOR, GNTR FAMILY"/>
    <property type="match status" value="1"/>
</dbReference>
<dbReference type="Pfam" id="PF07729">
    <property type="entry name" value="FCD"/>
    <property type="match status" value="1"/>
</dbReference>
<dbReference type="Pfam" id="PF00392">
    <property type="entry name" value="GntR"/>
    <property type="match status" value="1"/>
</dbReference>
<dbReference type="PRINTS" id="PR00035">
    <property type="entry name" value="HTHGNTR"/>
</dbReference>
<dbReference type="SMART" id="SM00895">
    <property type="entry name" value="FCD"/>
    <property type="match status" value="1"/>
</dbReference>
<dbReference type="SMART" id="SM00345">
    <property type="entry name" value="HTH_GNTR"/>
    <property type="match status" value="1"/>
</dbReference>
<dbReference type="SUPFAM" id="SSF48008">
    <property type="entry name" value="GntR ligand-binding domain-like"/>
    <property type="match status" value="1"/>
</dbReference>
<dbReference type="SUPFAM" id="SSF46785">
    <property type="entry name" value="Winged helix' DNA-binding domain"/>
    <property type="match status" value="1"/>
</dbReference>
<dbReference type="PROSITE" id="PS50949">
    <property type="entry name" value="HTH_GNTR"/>
    <property type="match status" value="1"/>
</dbReference>
<evidence type="ECO:0000255" key="1">
    <source>
        <dbReference type="PROSITE-ProRule" id="PRU00307"/>
    </source>
</evidence>
<evidence type="ECO:0000305" key="2"/>
<sequence>MAQTNGRTNRRDIYLKLRQMVLTLELAPGAALSENELAASMGVSRTPVRESLILLAQEGLVQVFPKIGSFVSRVDPARVADAQFLREAVELGSLDALPAELDPAVVGELRDNLVRQGRKDLDLEEFFGLDEAFHQGLMRLSGHGNVWTTVAAAKGHLDRARRLGLHENVSPAVFVAQHREIFDAVTEGDVPLARTAMRTHLRAVFDDIERIRAHSPELFATDAATVPVRRNIVVWE</sequence>
<protein>
    <recommendedName>
        <fullName>Uncharacterized HTH-type transcriptional regulator in unstable DNA locus</fullName>
    </recommendedName>
    <alternativeName>
        <fullName>ORF 1</fullName>
    </alternativeName>
</protein>
<name>YIN1_STRAM</name>
<feature type="chain" id="PRO_0000050703" description="Uncharacterized HTH-type transcriptional regulator in unstable DNA locus">
    <location>
        <begin position="1"/>
        <end position="236"/>
    </location>
</feature>
<feature type="domain" description="HTH gntR-type" evidence="1">
    <location>
        <begin position="7"/>
        <end position="74"/>
    </location>
</feature>
<feature type="DNA-binding region" description="H-T-H motif" evidence="1">
    <location>
        <begin position="34"/>
        <end position="53"/>
    </location>
</feature>
<feature type="sequence conflict" description="In Ref. 2." evidence="2" ref="2">
    <original>K</original>
    <variation>Q</variation>
    <location>
        <position position="154"/>
    </location>
</feature>
<organism>
    <name type="scientific">Streptomyces ambofaciens</name>
    <dbReference type="NCBI Taxonomy" id="1889"/>
    <lineage>
        <taxon>Bacteria</taxon>
        <taxon>Bacillati</taxon>
        <taxon>Actinomycetota</taxon>
        <taxon>Actinomycetes</taxon>
        <taxon>Kitasatosporales</taxon>
        <taxon>Streptomycetaceae</taxon>
        <taxon>Streptomyces</taxon>
    </lineage>
</organism>
<keyword id="KW-0238">DNA-binding</keyword>
<keyword id="KW-0804">Transcription</keyword>
<keyword id="KW-0805">Transcription regulation</keyword>
<proteinExistence type="predicted"/>
<reference key="1">
    <citation type="journal article" date="1993" name="J. Gen. Microbiol.">
        <title>Analysis of genome instability in Streptomyces ambofaciens.</title>
        <authorList>
            <person name="Schneider D."/>
            <person name="Aigle B."/>
            <person name="Leblond P."/>
            <person name="Simonet J.-M."/>
            <person name="Decaris B."/>
        </authorList>
    </citation>
    <scope>NUCLEOTIDE SEQUENCE [GENOMIC DNA]</scope>
    <source>
        <strain>DSM 40697 / NRRL 2531 / ETH 6703</strain>
    </source>
</reference>
<reference key="2">
    <citation type="journal article" date="1992" name="Gene">
        <title>Genetic instability in Streptomyces ambofaciens: inducibility and associated genome plasticity.</title>
        <authorList>
            <person name="Simonet J.-M."/>
            <person name="Schneider D."/>
            <person name="Volff J.-N."/>
            <person name="Dary A."/>
            <person name="Decaris B."/>
        </authorList>
    </citation>
    <scope>NUCLEOTIDE SEQUENCE [GENOMIC DNA]</scope>
</reference>